<feature type="chain" id="PRO_1000065235" description="Regulatory protein RecX">
    <location>
        <begin position="1"/>
        <end position="187"/>
    </location>
</feature>
<feature type="region of interest" description="Disordered" evidence="2">
    <location>
        <begin position="1"/>
        <end position="44"/>
    </location>
</feature>
<feature type="compositionally biased region" description="Basic and acidic residues" evidence="2">
    <location>
        <begin position="13"/>
        <end position="24"/>
    </location>
</feature>
<evidence type="ECO:0000255" key="1">
    <source>
        <dbReference type="HAMAP-Rule" id="MF_01114"/>
    </source>
</evidence>
<evidence type="ECO:0000256" key="2">
    <source>
        <dbReference type="SAM" id="MobiDB-lite"/>
    </source>
</evidence>
<dbReference type="EMBL" id="CP000305">
    <property type="protein sequence ID" value="ABG17120.1"/>
    <property type="molecule type" value="Genomic_DNA"/>
</dbReference>
<dbReference type="EMBL" id="ACNQ01000007">
    <property type="protein sequence ID" value="EEO77987.1"/>
    <property type="molecule type" value="Genomic_DNA"/>
</dbReference>
<dbReference type="RefSeq" id="WP_002209447.1">
    <property type="nucleotide sequence ID" value="NZ_ACNQ01000007.1"/>
</dbReference>
<dbReference type="SMR" id="Q1CLL0"/>
<dbReference type="GeneID" id="57975403"/>
<dbReference type="KEGG" id="ypn:YPN_0788"/>
<dbReference type="HOGENOM" id="CLU_066607_3_2_6"/>
<dbReference type="Proteomes" id="UP000008936">
    <property type="component" value="Chromosome"/>
</dbReference>
<dbReference type="GO" id="GO:0005737">
    <property type="term" value="C:cytoplasm"/>
    <property type="evidence" value="ECO:0007669"/>
    <property type="project" value="UniProtKB-SubCell"/>
</dbReference>
<dbReference type="GO" id="GO:0006282">
    <property type="term" value="P:regulation of DNA repair"/>
    <property type="evidence" value="ECO:0007669"/>
    <property type="project" value="UniProtKB-UniRule"/>
</dbReference>
<dbReference type="Gene3D" id="1.10.10.10">
    <property type="entry name" value="Winged helix-like DNA-binding domain superfamily/Winged helix DNA-binding domain"/>
    <property type="match status" value="3"/>
</dbReference>
<dbReference type="HAMAP" id="MF_01114">
    <property type="entry name" value="RecX"/>
    <property type="match status" value="1"/>
</dbReference>
<dbReference type="InterPro" id="IPR053924">
    <property type="entry name" value="RecX_HTH_2nd"/>
</dbReference>
<dbReference type="InterPro" id="IPR053925">
    <property type="entry name" value="RecX_HTH_3rd"/>
</dbReference>
<dbReference type="InterPro" id="IPR003783">
    <property type="entry name" value="Regulatory_RecX"/>
</dbReference>
<dbReference type="InterPro" id="IPR036388">
    <property type="entry name" value="WH-like_DNA-bd_sf"/>
</dbReference>
<dbReference type="NCBIfam" id="NF001053">
    <property type="entry name" value="PRK00117.1-3"/>
    <property type="match status" value="1"/>
</dbReference>
<dbReference type="PANTHER" id="PTHR33602">
    <property type="entry name" value="REGULATORY PROTEIN RECX FAMILY PROTEIN"/>
    <property type="match status" value="1"/>
</dbReference>
<dbReference type="PANTHER" id="PTHR33602:SF1">
    <property type="entry name" value="REGULATORY PROTEIN RECX FAMILY PROTEIN"/>
    <property type="match status" value="1"/>
</dbReference>
<dbReference type="Pfam" id="PF02631">
    <property type="entry name" value="RecX_HTH2"/>
    <property type="match status" value="1"/>
</dbReference>
<dbReference type="Pfam" id="PF21981">
    <property type="entry name" value="RecX_HTH3"/>
    <property type="match status" value="1"/>
</dbReference>
<reference key="1">
    <citation type="journal article" date="2006" name="J. Bacteriol.">
        <title>Complete genome sequence of Yersinia pestis strains Antiqua and Nepal516: evidence of gene reduction in an emerging pathogen.</title>
        <authorList>
            <person name="Chain P.S.G."/>
            <person name="Hu P."/>
            <person name="Malfatti S.A."/>
            <person name="Radnedge L."/>
            <person name="Larimer F."/>
            <person name="Vergez L.M."/>
            <person name="Worsham P."/>
            <person name="Chu M.C."/>
            <person name="Andersen G.L."/>
        </authorList>
    </citation>
    <scope>NUCLEOTIDE SEQUENCE [LARGE SCALE GENOMIC DNA]</scope>
    <source>
        <strain>Nepal516</strain>
    </source>
</reference>
<reference key="2">
    <citation type="submission" date="2009-04" db="EMBL/GenBank/DDBJ databases">
        <title>Yersinia pestis Nepal516A whole genome shotgun sequencing project.</title>
        <authorList>
            <person name="Plunkett G. III"/>
            <person name="Anderson B.D."/>
            <person name="Baumler D.J."/>
            <person name="Burland V."/>
            <person name="Cabot E.L."/>
            <person name="Glasner J.D."/>
            <person name="Mau B."/>
            <person name="Neeno-Eckwall E."/>
            <person name="Perna N.T."/>
            <person name="Munk A.C."/>
            <person name="Tapia R."/>
            <person name="Green L.D."/>
            <person name="Rogers Y.C."/>
            <person name="Detter J.C."/>
            <person name="Bruce D.C."/>
            <person name="Brettin T.S."/>
        </authorList>
    </citation>
    <scope>NUCLEOTIDE SEQUENCE [LARGE SCALE GENOMIC DNA]</scope>
    <source>
        <strain>Nepal516</strain>
    </source>
</reference>
<organism>
    <name type="scientific">Yersinia pestis bv. Antiqua (strain Nepal516)</name>
    <dbReference type="NCBI Taxonomy" id="377628"/>
    <lineage>
        <taxon>Bacteria</taxon>
        <taxon>Pseudomonadati</taxon>
        <taxon>Pseudomonadota</taxon>
        <taxon>Gammaproteobacteria</taxon>
        <taxon>Enterobacterales</taxon>
        <taxon>Yersiniaceae</taxon>
        <taxon>Yersinia</taxon>
    </lineage>
</organism>
<gene>
    <name evidence="1" type="primary">recX</name>
    <name type="ordered locus">YPN_0788</name>
    <name type="ORF">YP516_0840</name>
</gene>
<comment type="function">
    <text evidence="1">Modulates RecA activity.</text>
</comment>
<comment type="subcellular location">
    <subcellularLocation>
        <location evidence="1">Cytoplasm</location>
    </subcellularLocation>
</comment>
<comment type="similarity">
    <text evidence="1">Belongs to the RecX family.</text>
</comment>
<accession>Q1CLL0</accession>
<accession>C4GPY1</accession>
<protein>
    <recommendedName>
        <fullName evidence="1">Regulatory protein RecX</fullName>
    </recommendedName>
</protein>
<keyword id="KW-0963">Cytoplasm</keyword>
<sequence>MNDQLSRAMRLLSQRDHSESELRRKLAAPPFSAKGNWGKRSGAKSSDVVESNLVESNPVESNLAESNAIEESDPQVIEQVIDYCYQHNWLDDSRFAASYINSRSRKGYGVQRIRSELMQKGVDKERILAAFENSEIDWCQLAKEVAQRKFSETLPVEWKEKAKVQRYLLYRGFFQEEIQSIYTDSVE</sequence>
<proteinExistence type="inferred from homology"/>
<name>RECX_YERPN</name>